<accession>A9M9Y5</accession>
<dbReference type="EC" id="3.1.-.-" evidence="1"/>
<dbReference type="EMBL" id="CP000872">
    <property type="protein sequence ID" value="ABX63180.1"/>
    <property type="molecule type" value="Genomic_DNA"/>
</dbReference>
<dbReference type="SMR" id="A9M9Y5"/>
<dbReference type="KEGG" id="bcs:BCAN_A2198"/>
<dbReference type="HOGENOM" id="CLU_106710_0_0_5"/>
<dbReference type="PhylomeDB" id="A9M9Y5"/>
<dbReference type="Proteomes" id="UP000001385">
    <property type="component" value="Chromosome I"/>
</dbReference>
<dbReference type="GO" id="GO:0005737">
    <property type="term" value="C:cytoplasm"/>
    <property type="evidence" value="ECO:0007669"/>
    <property type="project" value="UniProtKB-SubCell"/>
</dbReference>
<dbReference type="GO" id="GO:0004222">
    <property type="term" value="F:metalloendopeptidase activity"/>
    <property type="evidence" value="ECO:0007669"/>
    <property type="project" value="InterPro"/>
</dbReference>
<dbReference type="GO" id="GO:0004521">
    <property type="term" value="F:RNA endonuclease activity"/>
    <property type="evidence" value="ECO:0007669"/>
    <property type="project" value="UniProtKB-UniRule"/>
</dbReference>
<dbReference type="GO" id="GO:0008270">
    <property type="term" value="F:zinc ion binding"/>
    <property type="evidence" value="ECO:0007669"/>
    <property type="project" value="UniProtKB-UniRule"/>
</dbReference>
<dbReference type="GO" id="GO:0006364">
    <property type="term" value="P:rRNA processing"/>
    <property type="evidence" value="ECO:0007669"/>
    <property type="project" value="UniProtKB-UniRule"/>
</dbReference>
<dbReference type="Gene3D" id="3.40.390.30">
    <property type="entry name" value="Metalloproteases ('zincins'), catalytic domain"/>
    <property type="match status" value="1"/>
</dbReference>
<dbReference type="HAMAP" id="MF_00009">
    <property type="entry name" value="Endoribonucl_YbeY"/>
    <property type="match status" value="1"/>
</dbReference>
<dbReference type="InterPro" id="IPR023091">
    <property type="entry name" value="MetalPrtase_cat_dom_sf_prd"/>
</dbReference>
<dbReference type="InterPro" id="IPR002036">
    <property type="entry name" value="YbeY"/>
</dbReference>
<dbReference type="InterPro" id="IPR020549">
    <property type="entry name" value="YbeY_CS"/>
</dbReference>
<dbReference type="NCBIfam" id="TIGR00043">
    <property type="entry name" value="rRNA maturation RNase YbeY"/>
    <property type="match status" value="1"/>
</dbReference>
<dbReference type="PANTHER" id="PTHR46986">
    <property type="entry name" value="ENDORIBONUCLEASE YBEY, CHLOROPLASTIC"/>
    <property type="match status" value="1"/>
</dbReference>
<dbReference type="PANTHER" id="PTHR46986:SF1">
    <property type="entry name" value="ENDORIBONUCLEASE YBEY, CHLOROPLASTIC"/>
    <property type="match status" value="1"/>
</dbReference>
<dbReference type="Pfam" id="PF02130">
    <property type="entry name" value="YbeY"/>
    <property type="match status" value="1"/>
</dbReference>
<dbReference type="SUPFAM" id="SSF55486">
    <property type="entry name" value="Metalloproteases ('zincins'), catalytic domain"/>
    <property type="match status" value="1"/>
</dbReference>
<dbReference type="PROSITE" id="PS01306">
    <property type="entry name" value="UPF0054"/>
    <property type="match status" value="1"/>
</dbReference>
<organism>
    <name type="scientific">Brucella canis (strain ATCC 23365 / NCTC 10854 / RM-666)</name>
    <dbReference type="NCBI Taxonomy" id="483179"/>
    <lineage>
        <taxon>Bacteria</taxon>
        <taxon>Pseudomonadati</taxon>
        <taxon>Pseudomonadota</taxon>
        <taxon>Alphaproteobacteria</taxon>
        <taxon>Hyphomicrobiales</taxon>
        <taxon>Brucellaceae</taxon>
        <taxon>Brucella/Ochrobactrum group</taxon>
        <taxon>Brucella</taxon>
    </lineage>
</organism>
<feature type="chain" id="PRO_1000073895" description="Endoribonuclease YbeY">
    <location>
        <begin position="1"/>
        <end position="168"/>
    </location>
</feature>
<feature type="binding site" evidence="1">
    <location>
        <position position="122"/>
    </location>
    <ligand>
        <name>Zn(2+)</name>
        <dbReference type="ChEBI" id="CHEBI:29105"/>
        <note>catalytic</note>
    </ligand>
</feature>
<feature type="binding site" evidence="1">
    <location>
        <position position="126"/>
    </location>
    <ligand>
        <name>Zn(2+)</name>
        <dbReference type="ChEBI" id="CHEBI:29105"/>
        <note>catalytic</note>
    </ligand>
</feature>
<feature type="binding site" evidence="1">
    <location>
        <position position="132"/>
    </location>
    <ligand>
        <name>Zn(2+)</name>
        <dbReference type="ChEBI" id="CHEBI:29105"/>
        <note>catalytic</note>
    </ligand>
</feature>
<sequence>MSDNAIHIDIMIEAGNWPDEASLESLVSKSVAAAWNNLGLKSATSELSVVFTDDASIQLLNGEWRGKDKPTNVLSFPAFPVKAGSQPGPMLGDIVIARETVEREAKEEGKPIENHLSHLVVHGFLHLLGYDHETDEEAEVMEAREREILHALAIPDPYAVSDEDINND</sequence>
<reference key="1">
    <citation type="submission" date="2007-10" db="EMBL/GenBank/DDBJ databases">
        <title>Brucella canis ATCC 23365 whole genome shotgun sequencing project.</title>
        <authorList>
            <person name="Setubal J.C."/>
            <person name="Bowns C."/>
            <person name="Boyle S."/>
            <person name="Crasta O.R."/>
            <person name="Czar M.J."/>
            <person name="Dharmanolla C."/>
            <person name="Gillespie J.J."/>
            <person name="Kenyon R.W."/>
            <person name="Lu J."/>
            <person name="Mane S."/>
            <person name="Mohapatra S."/>
            <person name="Nagrani S."/>
            <person name="Purkayastha A."/>
            <person name="Rajasimha H.K."/>
            <person name="Shallom J.M."/>
            <person name="Shallom S."/>
            <person name="Shukla M."/>
            <person name="Snyder E.E."/>
            <person name="Sobral B.W."/>
            <person name="Wattam A.R."/>
            <person name="Will R."/>
            <person name="Williams K."/>
            <person name="Yoo H."/>
            <person name="Bruce D."/>
            <person name="Detter C."/>
            <person name="Munk C."/>
            <person name="Brettin T.S."/>
        </authorList>
    </citation>
    <scope>NUCLEOTIDE SEQUENCE [LARGE SCALE GENOMIC DNA]</scope>
    <source>
        <strain>ATCC 23365 / NCTC 10854 / RM-666</strain>
    </source>
</reference>
<protein>
    <recommendedName>
        <fullName evidence="1">Endoribonuclease YbeY</fullName>
        <ecNumber evidence="1">3.1.-.-</ecNumber>
    </recommendedName>
</protein>
<proteinExistence type="inferred from homology"/>
<comment type="function">
    <text evidence="1">Single strand-specific metallo-endoribonuclease involved in late-stage 70S ribosome quality control and in maturation of the 3' terminus of the 16S rRNA.</text>
</comment>
<comment type="cofactor">
    <cofactor evidence="1">
        <name>Zn(2+)</name>
        <dbReference type="ChEBI" id="CHEBI:29105"/>
    </cofactor>
    <text evidence="1">Binds 1 zinc ion.</text>
</comment>
<comment type="subcellular location">
    <subcellularLocation>
        <location evidence="1">Cytoplasm</location>
    </subcellularLocation>
</comment>
<comment type="similarity">
    <text evidence="1">Belongs to the endoribonuclease YbeY family.</text>
</comment>
<gene>
    <name evidence="1" type="primary">ybeY</name>
    <name type="ordered locus">BCAN_A2198</name>
</gene>
<evidence type="ECO:0000255" key="1">
    <source>
        <dbReference type="HAMAP-Rule" id="MF_00009"/>
    </source>
</evidence>
<keyword id="KW-0963">Cytoplasm</keyword>
<keyword id="KW-0255">Endonuclease</keyword>
<keyword id="KW-0378">Hydrolase</keyword>
<keyword id="KW-0479">Metal-binding</keyword>
<keyword id="KW-0540">Nuclease</keyword>
<keyword id="KW-1185">Reference proteome</keyword>
<keyword id="KW-0690">Ribosome biogenesis</keyword>
<keyword id="KW-0698">rRNA processing</keyword>
<keyword id="KW-0862">Zinc</keyword>
<name>YBEY_BRUC2</name>